<protein>
    <recommendedName>
        <fullName evidence="1">Zinc transport protein ZntB</fullName>
    </recommendedName>
</protein>
<gene>
    <name evidence="1" type="primary">zntB</name>
    <name type="ordered locus">ECUMN_1638</name>
</gene>
<proteinExistence type="inferred from homology"/>
<accession>B7N4F0</accession>
<keyword id="KW-0997">Cell inner membrane</keyword>
<keyword id="KW-1003">Cell membrane</keyword>
<keyword id="KW-0406">Ion transport</keyword>
<keyword id="KW-0472">Membrane</keyword>
<keyword id="KW-0812">Transmembrane</keyword>
<keyword id="KW-1133">Transmembrane helix</keyword>
<keyword id="KW-0813">Transport</keyword>
<keyword id="KW-0862">Zinc</keyword>
<comment type="function">
    <text evidence="1">Zinc transporter. Acts as a Zn(2+):proton symporter, which likely mediates zinc ion uptake.</text>
</comment>
<comment type="catalytic activity">
    <reaction evidence="1">
        <text>Zn(2+)(out) + H(+)(out) = Zn(2+)(in) + H(+)(in)</text>
        <dbReference type="Rhea" id="RHEA:71195"/>
        <dbReference type="ChEBI" id="CHEBI:15378"/>
        <dbReference type="ChEBI" id="CHEBI:29105"/>
    </reaction>
    <physiologicalReaction direction="left-to-right" evidence="1">
        <dbReference type="Rhea" id="RHEA:71196"/>
    </physiologicalReaction>
</comment>
<comment type="subcellular location">
    <subcellularLocation>
        <location evidence="1">Cell inner membrane</location>
        <topology evidence="1">Multi-pass membrane protein</topology>
    </subcellularLocation>
</comment>
<comment type="similarity">
    <text evidence="1">Belongs to the CorA metal ion transporter (MIT) (TC 1.A.35) family.</text>
</comment>
<name>ZNTB_ECOLU</name>
<dbReference type="EMBL" id="CU928163">
    <property type="protein sequence ID" value="CAR12843.1"/>
    <property type="molecule type" value="Genomic_DNA"/>
</dbReference>
<dbReference type="RefSeq" id="WP_000387388.1">
    <property type="nucleotide sequence ID" value="NC_011751.1"/>
</dbReference>
<dbReference type="RefSeq" id="YP_002412380.1">
    <property type="nucleotide sequence ID" value="NC_011751.1"/>
</dbReference>
<dbReference type="SMR" id="B7N4F0"/>
<dbReference type="STRING" id="585056.ECUMN_1638"/>
<dbReference type="GeneID" id="93775479"/>
<dbReference type="KEGG" id="eum:ECUMN_1638"/>
<dbReference type="PATRIC" id="fig|585056.7.peg.1831"/>
<dbReference type="HOGENOM" id="CLU_007127_2_0_6"/>
<dbReference type="Proteomes" id="UP000007097">
    <property type="component" value="Chromosome"/>
</dbReference>
<dbReference type="GO" id="GO:0005886">
    <property type="term" value="C:plasma membrane"/>
    <property type="evidence" value="ECO:0007669"/>
    <property type="project" value="UniProtKB-SubCell"/>
</dbReference>
<dbReference type="GO" id="GO:0050897">
    <property type="term" value="F:cobalt ion binding"/>
    <property type="evidence" value="ECO:0007669"/>
    <property type="project" value="TreeGrafter"/>
</dbReference>
<dbReference type="GO" id="GO:0015087">
    <property type="term" value="F:cobalt ion transmembrane transporter activity"/>
    <property type="evidence" value="ECO:0007669"/>
    <property type="project" value="TreeGrafter"/>
</dbReference>
<dbReference type="GO" id="GO:0000287">
    <property type="term" value="F:magnesium ion binding"/>
    <property type="evidence" value="ECO:0007669"/>
    <property type="project" value="TreeGrafter"/>
</dbReference>
<dbReference type="GO" id="GO:0015095">
    <property type="term" value="F:magnesium ion transmembrane transporter activity"/>
    <property type="evidence" value="ECO:0007669"/>
    <property type="project" value="TreeGrafter"/>
</dbReference>
<dbReference type="GO" id="GO:0005385">
    <property type="term" value="F:zinc ion transmembrane transporter activity"/>
    <property type="evidence" value="ECO:0007669"/>
    <property type="project" value="UniProtKB-UniRule"/>
</dbReference>
<dbReference type="CDD" id="cd12833">
    <property type="entry name" value="ZntB-like_1"/>
    <property type="match status" value="1"/>
</dbReference>
<dbReference type="FunFam" id="1.20.58.340:FF:000002">
    <property type="entry name" value="Zinc transport protein ZntB"/>
    <property type="match status" value="1"/>
</dbReference>
<dbReference type="FunFam" id="1.20.58.340:FF:000003">
    <property type="entry name" value="Zinc transport protein ZntB"/>
    <property type="match status" value="1"/>
</dbReference>
<dbReference type="FunFam" id="3.30.460.20:FF:000001">
    <property type="entry name" value="Zinc transport protein ZntB"/>
    <property type="match status" value="1"/>
</dbReference>
<dbReference type="Gene3D" id="3.30.460.20">
    <property type="entry name" value="CorA soluble domain-like"/>
    <property type="match status" value="1"/>
</dbReference>
<dbReference type="Gene3D" id="1.20.58.340">
    <property type="entry name" value="Magnesium transport protein CorA, transmembrane region"/>
    <property type="match status" value="2"/>
</dbReference>
<dbReference type="HAMAP" id="MF_01565">
    <property type="entry name" value="ZntB"/>
    <property type="match status" value="1"/>
</dbReference>
<dbReference type="InterPro" id="IPR045861">
    <property type="entry name" value="CorA_cytoplasmic_dom"/>
</dbReference>
<dbReference type="InterPro" id="IPR045863">
    <property type="entry name" value="CorA_TM1_TM2"/>
</dbReference>
<dbReference type="InterPro" id="IPR002523">
    <property type="entry name" value="MgTranspt_CorA/ZnTranspt_ZntB"/>
</dbReference>
<dbReference type="InterPro" id="IPR023714">
    <property type="entry name" value="Zn_transp_ZntB"/>
</dbReference>
<dbReference type="NCBIfam" id="NF007092">
    <property type="entry name" value="PRK09546.1"/>
    <property type="match status" value="1"/>
</dbReference>
<dbReference type="PANTHER" id="PTHR46494">
    <property type="entry name" value="CORA FAMILY METAL ION TRANSPORTER (EUROFUNG)"/>
    <property type="match status" value="1"/>
</dbReference>
<dbReference type="PANTHER" id="PTHR46494:SF3">
    <property type="entry name" value="ZINC TRANSPORT PROTEIN ZNTB"/>
    <property type="match status" value="1"/>
</dbReference>
<dbReference type="Pfam" id="PF01544">
    <property type="entry name" value="CorA"/>
    <property type="match status" value="1"/>
</dbReference>
<dbReference type="SUPFAM" id="SSF143865">
    <property type="entry name" value="CorA soluble domain-like"/>
    <property type="match status" value="1"/>
</dbReference>
<dbReference type="SUPFAM" id="SSF144083">
    <property type="entry name" value="Magnesium transport protein CorA, transmembrane region"/>
    <property type="match status" value="1"/>
</dbReference>
<feature type="chain" id="PRO_1000189718" description="Zinc transport protein ZntB">
    <location>
        <begin position="1"/>
        <end position="327"/>
    </location>
</feature>
<feature type="topological domain" description="Cytoplasmic" evidence="1">
    <location>
        <begin position="1"/>
        <end position="273"/>
    </location>
</feature>
<feature type="transmembrane region" description="Helical" evidence="1">
    <location>
        <begin position="274"/>
        <end position="294"/>
    </location>
</feature>
<feature type="topological domain" description="Periplasmic" evidence="1">
    <location>
        <begin position="295"/>
        <end position="300"/>
    </location>
</feature>
<feature type="transmembrane region" description="Helical" evidence="1">
    <location>
        <begin position="301"/>
        <end position="321"/>
    </location>
</feature>
<feature type="topological domain" description="Cytoplasmic" evidence="1">
    <location>
        <begin position="322"/>
        <end position="327"/>
    </location>
</feature>
<sequence>MEAIKGSDVNVPDAVFAWMLDGRGGVKPLENTDVIDEAHPCWLHLNYVHHDSAQWLATTPLLPNNVRDALAGESTRPRVSRLGEGTLITLRCINGSTDERPDQLVAMRVYMDGRLIVSTRQRKVLALDDVVSDLEEGTGPTDCGGWLVDVCDALTDHSSEFIEQLHDKIIDLEDNLLDQQIPPRGFLALLRKQLIVMRRYMAPQRDVYARLASERLPWMSDDQRRRMQDIADRLGRGLDEIDACIARTGVMADEIAQVMQENLARRTYTMSLMAMVFLPSTFLTGLFGVNLGGIPGGGWQFGFSIFCILLVVLIGGVALWLHRSKWL</sequence>
<evidence type="ECO:0000255" key="1">
    <source>
        <dbReference type="HAMAP-Rule" id="MF_01565"/>
    </source>
</evidence>
<organism>
    <name type="scientific">Escherichia coli O17:K52:H18 (strain UMN026 / ExPEC)</name>
    <dbReference type="NCBI Taxonomy" id="585056"/>
    <lineage>
        <taxon>Bacteria</taxon>
        <taxon>Pseudomonadati</taxon>
        <taxon>Pseudomonadota</taxon>
        <taxon>Gammaproteobacteria</taxon>
        <taxon>Enterobacterales</taxon>
        <taxon>Enterobacteriaceae</taxon>
        <taxon>Escherichia</taxon>
    </lineage>
</organism>
<reference key="1">
    <citation type="journal article" date="2009" name="PLoS Genet.">
        <title>Organised genome dynamics in the Escherichia coli species results in highly diverse adaptive paths.</title>
        <authorList>
            <person name="Touchon M."/>
            <person name="Hoede C."/>
            <person name="Tenaillon O."/>
            <person name="Barbe V."/>
            <person name="Baeriswyl S."/>
            <person name="Bidet P."/>
            <person name="Bingen E."/>
            <person name="Bonacorsi S."/>
            <person name="Bouchier C."/>
            <person name="Bouvet O."/>
            <person name="Calteau A."/>
            <person name="Chiapello H."/>
            <person name="Clermont O."/>
            <person name="Cruveiller S."/>
            <person name="Danchin A."/>
            <person name="Diard M."/>
            <person name="Dossat C."/>
            <person name="Karoui M.E."/>
            <person name="Frapy E."/>
            <person name="Garry L."/>
            <person name="Ghigo J.M."/>
            <person name="Gilles A.M."/>
            <person name="Johnson J."/>
            <person name="Le Bouguenec C."/>
            <person name="Lescat M."/>
            <person name="Mangenot S."/>
            <person name="Martinez-Jehanne V."/>
            <person name="Matic I."/>
            <person name="Nassif X."/>
            <person name="Oztas S."/>
            <person name="Petit M.A."/>
            <person name="Pichon C."/>
            <person name="Rouy Z."/>
            <person name="Ruf C.S."/>
            <person name="Schneider D."/>
            <person name="Tourret J."/>
            <person name="Vacherie B."/>
            <person name="Vallenet D."/>
            <person name="Medigue C."/>
            <person name="Rocha E.P.C."/>
            <person name="Denamur E."/>
        </authorList>
    </citation>
    <scope>NUCLEOTIDE SEQUENCE [LARGE SCALE GENOMIC DNA]</scope>
    <source>
        <strain>UMN026 / ExPEC</strain>
    </source>
</reference>